<reference key="1">
    <citation type="journal article" date="2007" name="J. Virol.">
        <title>Evolutionary history and global spread of the emerging G12 human rotaviruses.</title>
        <authorList>
            <person name="Rahman M."/>
            <person name="Matthijnssens J."/>
            <person name="Yang X."/>
            <person name="Delbeke T."/>
            <person name="Arijs I."/>
            <person name="Taniguchi K."/>
            <person name="Iturriza-Gomara M."/>
            <person name="Iftekharuddin N."/>
            <person name="Azim T."/>
            <person name="Van Ranst M."/>
        </authorList>
    </citation>
    <scope>NUCLEOTIDE SEQUENCE [GENOMIC RNA]</scope>
</reference>
<reference key="2">
    <citation type="journal article" date="2008" name="J. Virol.">
        <title>Group A human rotavirus genomics: evidence that gene constellations are influenced by viral protein interactions.</title>
        <authorList>
            <person name="Heiman E.M."/>
            <person name="McDonald S.M."/>
            <person name="Barro M."/>
            <person name="Taraporewala Z.F."/>
            <person name="Bar-Magen T."/>
            <person name="Patton J.T."/>
        </authorList>
    </citation>
    <scope>NUCLEOTIDE SEQUENCE [GENOMIC RNA]</scope>
</reference>
<comment type="function">
    <text evidence="1">Plays an essential role in the viral genome replication. Participates, together with NSP2, in the formation of viral factories (viroplasms), which are large inclusions in the host cytoplasm where replication intermediates are assembled and viral RNA replication takes place. Orchestrates the recruitment of viroplasmic proteins such as capsid proteins to these factories. Participates in the selective exclusion of host proteins from stress granules (SG) and P bodies (PB). Also participates in the sequestration of these remodeled organelles in viral factories.</text>
</comment>
<comment type="cofactor">
    <cofactor evidence="1">
        <name>Mg(2+)</name>
        <dbReference type="ChEBI" id="CHEBI:18420"/>
    </cofactor>
</comment>
<comment type="subunit">
    <text evidence="1">Homodimer. Interacts with VP1. Interacts with VP2. Interacts with NSP2; this interaction leads to up-regulation of NSP5 hyperphosphorylation and formation of virus factories. Interacts with NSP6. Participates in the selective exclusion of host proteins from stress granules (SG) and P bodies (PB). Also participates in the sequestration of these remodeled organelles in viral factories.</text>
</comment>
<comment type="subcellular location">
    <subcellularLocation>
        <location evidence="1">Host cytoplasm</location>
    </subcellularLocation>
    <text evidence="1">Found in spherical cytoplasmic structures, called virus factories, that appear early after infection and are the site of viral replication and packaging.</text>
</comment>
<comment type="PTM">
    <text evidence="1">O-glycosylated.</text>
</comment>
<comment type="PTM">
    <text evidence="1">Hyperphosphorylated on serine residues, when in dimeric form. Phosphorylation by host CK1 is required for the hyperphosphorylation of NSP5 dimer.</text>
</comment>
<comment type="similarity">
    <text evidence="1">Belongs to the rotavirus NSP5 family.</text>
</comment>
<evidence type="ECO:0000255" key="1">
    <source>
        <dbReference type="HAMAP-Rule" id="MF_04092"/>
    </source>
</evidence>
<evidence type="ECO:0000256" key="2">
    <source>
        <dbReference type="SAM" id="MobiDB-lite"/>
    </source>
</evidence>
<proteinExistence type="inferred from homology"/>
<keyword id="KW-0325">Glycoprotein</keyword>
<keyword id="KW-1035">Host cytoplasm</keyword>
<keyword id="KW-0460">Magnesium</keyword>
<keyword id="KW-0479">Metal-binding</keyword>
<keyword id="KW-0547">Nucleotide-binding</keyword>
<keyword id="KW-0597">Phosphoprotein</keyword>
<keyword id="KW-0694">RNA-binding</keyword>
<organismHost>
    <name type="scientific">Homo sapiens</name>
    <name type="common">Human</name>
    <dbReference type="NCBI Taxonomy" id="9606"/>
</organismHost>
<protein>
    <recommendedName>
        <fullName evidence="1">Non-structural protein 5</fullName>
        <shortName evidence="1">NSP5</shortName>
    </recommendedName>
    <alternativeName>
        <fullName evidence="1">NS26</fullName>
    </alternativeName>
</protein>
<dbReference type="EMBL" id="DQ146698">
    <property type="protein sequence ID" value="ABA34252.1"/>
    <property type="molecule type" value="Genomic_RNA"/>
</dbReference>
<dbReference type="EMBL" id="EF672597">
    <property type="protein sequence ID" value="ABV53274.1"/>
    <property type="molecule type" value="Genomic_RNA"/>
</dbReference>
<dbReference type="Proteomes" id="UP000001459">
    <property type="component" value="Genome"/>
</dbReference>
<dbReference type="GO" id="GO:0030430">
    <property type="term" value="C:host cell cytoplasm"/>
    <property type="evidence" value="ECO:0007669"/>
    <property type="project" value="UniProtKB-SubCell"/>
</dbReference>
<dbReference type="GO" id="GO:0016887">
    <property type="term" value="F:ATP hydrolysis activity"/>
    <property type="evidence" value="ECO:0007669"/>
    <property type="project" value="UniProtKB-UniRule"/>
</dbReference>
<dbReference type="GO" id="GO:0000287">
    <property type="term" value="F:magnesium ion binding"/>
    <property type="evidence" value="ECO:0007669"/>
    <property type="project" value="UniProtKB-UniRule"/>
</dbReference>
<dbReference type="GO" id="GO:0000166">
    <property type="term" value="F:nucleotide binding"/>
    <property type="evidence" value="ECO:0007669"/>
    <property type="project" value="UniProtKB-UniRule"/>
</dbReference>
<dbReference type="GO" id="GO:0003723">
    <property type="term" value="F:RNA binding"/>
    <property type="evidence" value="ECO:0007669"/>
    <property type="project" value="UniProtKB-UniRule"/>
</dbReference>
<dbReference type="GO" id="GO:0019079">
    <property type="term" value="P:viral genome replication"/>
    <property type="evidence" value="ECO:0007669"/>
    <property type="project" value="UniProtKB-UniRule"/>
</dbReference>
<dbReference type="HAMAP" id="MF_04092">
    <property type="entry name" value="ROTA_NSP5"/>
    <property type="match status" value="1"/>
</dbReference>
<dbReference type="InterPro" id="IPR002512">
    <property type="entry name" value="Rotavirus_A/C_NSP5"/>
</dbReference>
<dbReference type="Pfam" id="PF01525">
    <property type="entry name" value="Rota_NS26"/>
    <property type="match status" value="2"/>
</dbReference>
<dbReference type="PIRSF" id="PIRSF004006">
    <property type="entry name" value="Rota_NS26"/>
    <property type="match status" value="1"/>
</dbReference>
<organism>
    <name type="scientific">Rotavirus A (strain RVA/Human/Philippines/L26/1987/G12P1B[4])</name>
    <name type="common">RV-A</name>
    <dbReference type="NCBI Taxonomy" id="10953"/>
    <lineage>
        <taxon>Viruses</taxon>
        <taxon>Riboviria</taxon>
        <taxon>Orthornavirae</taxon>
        <taxon>Duplornaviricota</taxon>
        <taxon>Resentoviricetes</taxon>
        <taxon>Reovirales</taxon>
        <taxon>Sedoreoviridae</taxon>
        <taxon>Rotavirus</taxon>
        <taxon>Rotavirus A</taxon>
    </lineage>
</organism>
<name>NSP5_ROTHL</name>
<accession>A3DSL0</accession>
<accession>B3SRU9</accession>
<feature type="chain" id="PRO_0000369503" description="Non-structural protein 5">
    <location>
        <begin position="1"/>
        <end position="197"/>
    </location>
</feature>
<feature type="region of interest" description="Disordered" evidence="2">
    <location>
        <begin position="17"/>
        <end position="37"/>
    </location>
</feature>
<feature type="region of interest" description="Disordered" evidence="2">
    <location>
        <begin position="53"/>
        <end position="72"/>
    </location>
</feature>
<feature type="region of interest" description="Disordered" evidence="2">
    <location>
        <begin position="130"/>
        <end position="157"/>
    </location>
</feature>
<feature type="compositionally biased region" description="Low complexity" evidence="2">
    <location>
        <begin position="17"/>
        <end position="30"/>
    </location>
</feature>
<feature type="binding site" evidence="1">
    <location>
        <position position="92"/>
    </location>
    <ligand>
        <name>Mg(2+)</name>
        <dbReference type="ChEBI" id="CHEBI:18420"/>
    </ligand>
</feature>
<feature type="modified residue" description="Phosphoserine; by host CK1" evidence="1">
    <location>
        <position position="67"/>
    </location>
</feature>
<feature type="modified residue" description="Phosphoserine; by host" evidence="1">
    <location>
        <position position="153"/>
    </location>
</feature>
<feature type="modified residue" description="Phosphoserine; by host" evidence="1">
    <location>
        <position position="155"/>
    </location>
</feature>
<feature type="modified residue" description="Phosphoserine; by host" evidence="1">
    <location>
        <position position="163"/>
    </location>
</feature>
<feature type="modified residue" description="Phosphoserine; by host" evidence="1">
    <location>
        <position position="165"/>
    </location>
</feature>
<sequence>MSLSIDVTSLPSISSSIFKNESSSTTSTLSGKSIGRSEQYISPDAEAFNKYMLSKSPEDIGPSDSASNDPLTSFSIRSNAVKTNADAGVSMDSSTQSRSSSNVGCDQLDFSLTKGINVNANLESCISISTDHKKEKSKKDKSRKHYPRIEADSDSEDYILDDSDSDDGKCKNCKYKKKYFALRMRMKRVAMQLIEDL</sequence>